<keyword id="KW-0002">3D-structure</keyword>
<keyword id="KW-0025">Alternative splicing</keyword>
<keyword id="KW-1003">Cell membrane</keyword>
<keyword id="KW-0966">Cell projection</keyword>
<keyword id="KW-0343">GTPase activation</keyword>
<keyword id="KW-0472">Membrane</keyword>
<keyword id="KW-0539">Nucleus</keyword>
<keyword id="KW-0597">Phosphoprotein</keyword>
<keyword id="KW-1267">Proteomics identification</keyword>
<keyword id="KW-1185">Reference proteome</keyword>
<keyword id="KW-0734">Signal transduction inhibitor</keyword>
<protein>
    <recommendedName>
        <fullName>Regulator of G-protein signaling 8</fullName>
        <shortName>RGS8</shortName>
    </recommendedName>
</protein>
<name>RGS8_HUMAN</name>
<comment type="function">
    <text evidence="1 3">Regulates G protein-coupled receptor signaling cascades, including signaling via muscarinic acetylcholine receptor CHRM2 and dopamine receptor DRD2 (By similarity). Inhibits signal transduction by increasing the GTPase activity of G protein alpha subunits, thereby driving them into their inactive GDP-bound form (PubMed:18434541). Modulates the activity of potassium channels that are activated in response to DRD2 and CHRM2 signaling (By similarity).</text>
</comment>
<comment type="subunit">
    <text evidence="1 3">Interacts with GNAO1 (By similarity). Interacts with GNAI3.</text>
</comment>
<comment type="interaction">
    <interactant intactId="EBI-10216117">
        <id>P57771</id>
    </interactant>
    <interactant intactId="EBI-618309">
        <id>Q08379</id>
        <label>GOLGA2</label>
    </interactant>
    <organismsDiffer>false</organismsDiffer>
    <experiments>3</experiments>
</comment>
<comment type="interaction">
    <interactant intactId="EBI-12058229">
        <id>P57771-2</id>
    </interactant>
    <interactant intactId="EBI-739674">
        <id>Q15834</id>
        <label>CCDC85B</label>
    </interactant>
    <organismsDiffer>false</organismsDiffer>
    <experiments>3</experiments>
</comment>
<comment type="interaction">
    <interactant intactId="EBI-12058229">
        <id>P57771-2</id>
    </interactant>
    <interactant intactId="EBI-618309">
        <id>Q08379</id>
        <label>GOLGA2</label>
    </interactant>
    <organismsDiffer>false</organismsDiffer>
    <experiments>3</experiments>
</comment>
<comment type="interaction">
    <interactant intactId="EBI-12058229">
        <id>P57771-2</id>
    </interactant>
    <interactant intactId="EBI-10961706">
        <id>Q96ED9-2</id>
        <label>HOOK2</label>
    </interactant>
    <organismsDiffer>false</organismsDiffer>
    <experiments>3</experiments>
</comment>
<comment type="interaction">
    <interactant intactId="EBI-12058229">
        <id>P57771-2</id>
    </interactant>
    <interactant intactId="EBI-10171697">
        <id>Q6A162</id>
        <label>KRT40</label>
    </interactant>
    <organismsDiffer>false</organismsDiffer>
    <experiments>3</experiments>
</comment>
<comment type="interaction">
    <interactant intactId="EBI-12058229">
        <id>P57771-2</id>
    </interactant>
    <interactant intactId="EBI-742388">
        <id>Q9H8W4</id>
        <label>PLEKHF2</label>
    </interactant>
    <organismsDiffer>false</organismsDiffer>
    <experiments>3</experiments>
</comment>
<comment type="interaction">
    <interactant intactId="EBI-12058229">
        <id>P57771-2</id>
    </interactant>
    <interactant intactId="EBI-12157345">
        <id>Q8TAS1-2</id>
        <label>UHMK1</label>
    </interactant>
    <organismsDiffer>false</organismsDiffer>
    <experiments>3</experiments>
</comment>
<comment type="subcellular location">
    <subcellularLocation>
        <location evidence="1">Cell membrane</location>
        <topology evidence="1">Peripheral membrane protein</topology>
        <orientation evidence="1">Cytoplasmic side</orientation>
    </subcellularLocation>
    <subcellularLocation>
        <location evidence="1">Membrane</location>
        <topology evidence="1">Peripheral membrane protein</topology>
        <orientation evidence="1">Cytoplasmic side</orientation>
    </subcellularLocation>
    <subcellularLocation>
        <location evidence="1">Perikaryon</location>
    </subcellularLocation>
    <subcellularLocation>
        <location evidence="1">Cell projection</location>
        <location evidence="1">Dendrite</location>
    </subcellularLocation>
    <subcellularLocation>
        <location evidence="1">Nucleus</location>
    </subcellularLocation>
    <text evidence="1">Detected in Purkinje cell soma and dendrites. Associated with Purkinje cell membranes. Not detected in Purkinje cell nuclei. Detected in the nucleus after heterologous expression. Recruited to the cell membrane in the presence of GNAO1.</text>
</comment>
<comment type="alternative products">
    <event type="alternative splicing"/>
    <isoform>
        <id>P57771-1</id>
        <name>1</name>
        <sequence type="displayed"/>
    </isoform>
    <isoform>
        <id>P57771-2</id>
        <name>2</name>
        <sequence type="described" ref="VSP_036421"/>
    </isoform>
</comment>
<gene>
    <name type="primary">RGS8</name>
</gene>
<accession>P57771</accession>
<accession>B4DGL9</accession>
<accession>Q3SYD2</accession>
<reference key="1">
    <citation type="journal article" date="2001" name="Genomics">
        <title>Cloning and characterization of 13 novel transcripts and the human RGS8 gene from the 1q25 region encompassing the hereditary prostate cancer (HPC1) locus.</title>
        <authorList>
            <person name="Sood R."/>
            <person name="Bonner T.I."/>
            <person name="Malakowska I."/>
            <person name="Stephan D.A."/>
            <person name="Robbins C.M."/>
            <person name="Connors T.D."/>
            <person name="Morgenbesser S.D."/>
            <person name="Su K."/>
            <person name="Faruque M.U."/>
            <person name="Pinkett H."/>
            <person name="Graham C."/>
            <person name="Baxevanis A.D."/>
            <person name="Klinger K.W."/>
            <person name="Landes G.M."/>
            <person name="Trent J.M."/>
            <person name="Carpten J.D."/>
        </authorList>
    </citation>
    <scope>NUCLEOTIDE SEQUENCE [MRNA] (ISOFORM 2)</scope>
</reference>
<reference key="2">
    <citation type="submission" date="2000-08" db="EMBL/GenBank/DDBJ databases">
        <title>cDNA clones of human proteins involved in signal transduction sequenced by the Guthrie cDNA resource center (www.cdna.org).</title>
        <authorList>
            <person name="Puhl H.L. III"/>
            <person name="Ikeda S.R."/>
            <person name="Aronstam R.S."/>
        </authorList>
    </citation>
    <scope>NUCLEOTIDE SEQUENCE [LARGE SCALE MRNA] (ISOFORM 1)</scope>
</reference>
<reference key="3">
    <citation type="journal article" date="2004" name="Nat. Genet.">
        <title>Complete sequencing and characterization of 21,243 full-length human cDNAs.</title>
        <authorList>
            <person name="Ota T."/>
            <person name="Suzuki Y."/>
            <person name="Nishikawa T."/>
            <person name="Otsuki T."/>
            <person name="Sugiyama T."/>
            <person name="Irie R."/>
            <person name="Wakamatsu A."/>
            <person name="Hayashi K."/>
            <person name="Sato H."/>
            <person name="Nagai K."/>
            <person name="Kimura K."/>
            <person name="Makita H."/>
            <person name="Sekine M."/>
            <person name="Obayashi M."/>
            <person name="Nishi T."/>
            <person name="Shibahara T."/>
            <person name="Tanaka T."/>
            <person name="Ishii S."/>
            <person name="Yamamoto J."/>
            <person name="Saito K."/>
            <person name="Kawai Y."/>
            <person name="Isono Y."/>
            <person name="Nakamura Y."/>
            <person name="Nagahari K."/>
            <person name="Murakami K."/>
            <person name="Yasuda T."/>
            <person name="Iwayanagi T."/>
            <person name="Wagatsuma M."/>
            <person name="Shiratori A."/>
            <person name="Sudo H."/>
            <person name="Hosoiri T."/>
            <person name="Kaku Y."/>
            <person name="Kodaira H."/>
            <person name="Kondo H."/>
            <person name="Sugawara M."/>
            <person name="Takahashi M."/>
            <person name="Kanda K."/>
            <person name="Yokoi T."/>
            <person name="Furuya T."/>
            <person name="Kikkawa E."/>
            <person name="Omura Y."/>
            <person name="Abe K."/>
            <person name="Kamihara K."/>
            <person name="Katsuta N."/>
            <person name="Sato K."/>
            <person name="Tanikawa M."/>
            <person name="Yamazaki M."/>
            <person name="Ninomiya K."/>
            <person name="Ishibashi T."/>
            <person name="Yamashita H."/>
            <person name="Murakawa K."/>
            <person name="Fujimori K."/>
            <person name="Tanai H."/>
            <person name="Kimata M."/>
            <person name="Watanabe M."/>
            <person name="Hiraoka S."/>
            <person name="Chiba Y."/>
            <person name="Ishida S."/>
            <person name="Ono Y."/>
            <person name="Takiguchi S."/>
            <person name="Watanabe S."/>
            <person name="Yosida M."/>
            <person name="Hotuta T."/>
            <person name="Kusano J."/>
            <person name="Kanehori K."/>
            <person name="Takahashi-Fujii A."/>
            <person name="Hara H."/>
            <person name="Tanase T.-O."/>
            <person name="Nomura Y."/>
            <person name="Togiya S."/>
            <person name="Komai F."/>
            <person name="Hara R."/>
            <person name="Takeuchi K."/>
            <person name="Arita M."/>
            <person name="Imose N."/>
            <person name="Musashino K."/>
            <person name="Yuuki H."/>
            <person name="Oshima A."/>
            <person name="Sasaki N."/>
            <person name="Aotsuka S."/>
            <person name="Yoshikawa Y."/>
            <person name="Matsunawa H."/>
            <person name="Ichihara T."/>
            <person name="Shiohata N."/>
            <person name="Sano S."/>
            <person name="Moriya S."/>
            <person name="Momiyama H."/>
            <person name="Satoh N."/>
            <person name="Takami S."/>
            <person name="Terashima Y."/>
            <person name="Suzuki O."/>
            <person name="Nakagawa S."/>
            <person name="Senoh A."/>
            <person name="Mizoguchi H."/>
            <person name="Goto Y."/>
            <person name="Shimizu F."/>
            <person name="Wakebe H."/>
            <person name="Hishigaki H."/>
            <person name="Watanabe T."/>
            <person name="Sugiyama A."/>
            <person name="Takemoto M."/>
            <person name="Kawakami B."/>
            <person name="Yamazaki M."/>
            <person name="Watanabe K."/>
            <person name="Kumagai A."/>
            <person name="Itakura S."/>
            <person name="Fukuzumi Y."/>
            <person name="Fujimori Y."/>
            <person name="Komiyama M."/>
            <person name="Tashiro H."/>
            <person name="Tanigami A."/>
            <person name="Fujiwara T."/>
            <person name="Ono T."/>
            <person name="Yamada K."/>
            <person name="Fujii Y."/>
            <person name="Ozaki K."/>
            <person name="Hirao M."/>
            <person name="Ohmori Y."/>
            <person name="Kawabata A."/>
            <person name="Hikiji T."/>
            <person name="Kobatake N."/>
            <person name="Inagaki H."/>
            <person name="Ikema Y."/>
            <person name="Okamoto S."/>
            <person name="Okitani R."/>
            <person name="Kawakami T."/>
            <person name="Noguchi S."/>
            <person name="Itoh T."/>
            <person name="Shigeta K."/>
            <person name="Senba T."/>
            <person name="Matsumura K."/>
            <person name="Nakajima Y."/>
            <person name="Mizuno T."/>
            <person name="Morinaga M."/>
            <person name="Sasaki M."/>
            <person name="Togashi T."/>
            <person name="Oyama M."/>
            <person name="Hata H."/>
            <person name="Watanabe M."/>
            <person name="Komatsu T."/>
            <person name="Mizushima-Sugano J."/>
            <person name="Satoh T."/>
            <person name="Shirai Y."/>
            <person name="Takahashi Y."/>
            <person name="Nakagawa K."/>
            <person name="Okumura K."/>
            <person name="Nagase T."/>
            <person name="Nomura N."/>
            <person name="Kikuchi H."/>
            <person name="Masuho Y."/>
            <person name="Yamashita R."/>
            <person name="Nakai K."/>
            <person name="Yada T."/>
            <person name="Nakamura Y."/>
            <person name="Ohara O."/>
            <person name="Isogai T."/>
            <person name="Sugano S."/>
        </authorList>
    </citation>
    <scope>NUCLEOTIDE SEQUENCE [LARGE SCALE MRNA] (ISOFORM 1)</scope>
    <source>
        <tissue>Brain</tissue>
        <tissue>Thalamus</tissue>
    </source>
</reference>
<reference key="4">
    <citation type="journal article" date="2006" name="Nature">
        <title>The DNA sequence and biological annotation of human chromosome 1.</title>
        <authorList>
            <person name="Gregory S.G."/>
            <person name="Barlow K.F."/>
            <person name="McLay K.E."/>
            <person name="Kaul R."/>
            <person name="Swarbreck D."/>
            <person name="Dunham A."/>
            <person name="Scott C.E."/>
            <person name="Howe K.L."/>
            <person name="Woodfine K."/>
            <person name="Spencer C.C.A."/>
            <person name="Jones M.C."/>
            <person name="Gillson C."/>
            <person name="Searle S."/>
            <person name="Zhou Y."/>
            <person name="Kokocinski F."/>
            <person name="McDonald L."/>
            <person name="Evans R."/>
            <person name="Phillips K."/>
            <person name="Atkinson A."/>
            <person name="Cooper R."/>
            <person name="Jones C."/>
            <person name="Hall R.E."/>
            <person name="Andrews T.D."/>
            <person name="Lloyd C."/>
            <person name="Ainscough R."/>
            <person name="Almeida J.P."/>
            <person name="Ambrose K.D."/>
            <person name="Anderson F."/>
            <person name="Andrew R.W."/>
            <person name="Ashwell R.I.S."/>
            <person name="Aubin K."/>
            <person name="Babbage A.K."/>
            <person name="Bagguley C.L."/>
            <person name="Bailey J."/>
            <person name="Beasley H."/>
            <person name="Bethel G."/>
            <person name="Bird C.P."/>
            <person name="Bray-Allen S."/>
            <person name="Brown J.Y."/>
            <person name="Brown A.J."/>
            <person name="Buckley D."/>
            <person name="Burton J."/>
            <person name="Bye J."/>
            <person name="Carder C."/>
            <person name="Chapman J.C."/>
            <person name="Clark S.Y."/>
            <person name="Clarke G."/>
            <person name="Clee C."/>
            <person name="Cobley V."/>
            <person name="Collier R.E."/>
            <person name="Corby N."/>
            <person name="Coville G.J."/>
            <person name="Davies J."/>
            <person name="Deadman R."/>
            <person name="Dunn M."/>
            <person name="Earthrowl M."/>
            <person name="Ellington A.G."/>
            <person name="Errington H."/>
            <person name="Frankish A."/>
            <person name="Frankland J."/>
            <person name="French L."/>
            <person name="Garner P."/>
            <person name="Garnett J."/>
            <person name="Gay L."/>
            <person name="Ghori M.R.J."/>
            <person name="Gibson R."/>
            <person name="Gilby L.M."/>
            <person name="Gillett W."/>
            <person name="Glithero R.J."/>
            <person name="Grafham D.V."/>
            <person name="Griffiths C."/>
            <person name="Griffiths-Jones S."/>
            <person name="Grocock R."/>
            <person name="Hammond S."/>
            <person name="Harrison E.S.I."/>
            <person name="Hart E."/>
            <person name="Haugen E."/>
            <person name="Heath P.D."/>
            <person name="Holmes S."/>
            <person name="Holt K."/>
            <person name="Howden P.J."/>
            <person name="Hunt A.R."/>
            <person name="Hunt S.E."/>
            <person name="Hunter G."/>
            <person name="Isherwood J."/>
            <person name="James R."/>
            <person name="Johnson C."/>
            <person name="Johnson D."/>
            <person name="Joy A."/>
            <person name="Kay M."/>
            <person name="Kershaw J.K."/>
            <person name="Kibukawa M."/>
            <person name="Kimberley A.M."/>
            <person name="King A."/>
            <person name="Knights A.J."/>
            <person name="Lad H."/>
            <person name="Laird G."/>
            <person name="Lawlor S."/>
            <person name="Leongamornlert D.A."/>
            <person name="Lloyd D.M."/>
            <person name="Loveland J."/>
            <person name="Lovell J."/>
            <person name="Lush M.J."/>
            <person name="Lyne R."/>
            <person name="Martin S."/>
            <person name="Mashreghi-Mohammadi M."/>
            <person name="Matthews L."/>
            <person name="Matthews N.S.W."/>
            <person name="McLaren S."/>
            <person name="Milne S."/>
            <person name="Mistry S."/>
            <person name="Moore M.J.F."/>
            <person name="Nickerson T."/>
            <person name="O'Dell C.N."/>
            <person name="Oliver K."/>
            <person name="Palmeiri A."/>
            <person name="Palmer S.A."/>
            <person name="Parker A."/>
            <person name="Patel D."/>
            <person name="Pearce A.V."/>
            <person name="Peck A.I."/>
            <person name="Pelan S."/>
            <person name="Phelps K."/>
            <person name="Phillimore B.J."/>
            <person name="Plumb R."/>
            <person name="Rajan J."/>
            <person name="Raymond C."/>
            <person name="Rouse G."/>
            <person name="Saenphimmachak C."/>
            <person name="Sehra H.K."/>
            <person name="Sheridan E."/>
            <person name="Shownkeen R."/>
            <person name="Sims S."/>
            <person name="Skuce C.D."/>
            <person name="Smith M."/>
            <person name="Steward C."/>
            <person name="Subramanian S."/>
            <person name="Sycamore N."/>
            <person name="Tracey A."/>
            <person name="Tromans A."/>
            <person name="Van Helmond Z."/>
            <person name="Wall M."/>
            <person name="Wallis J.M."/>
            <person name="White S."/>
            <person name="Whitehead S.L."/>
            <person name="Wilkinson J.E."/>
            <person name="Willey D.L."/>
            <person name="Williams H."/>
            <person name="Wilming L."/>
            <person name="Wray P.W."/>
            <person name="Wu Z."/>
            <person name="Coulson A."/>
            <person name="Vaudin M."/>
            <person name="Sulston J.E."/>
            <person name="Durbin R.M."/>
            <person name="Hubbard T."/>
            <person name="Wooster R."/>
            <person name="Dunham I."/>
            <person name="Carter N.P."/>
            <person name="McVean G."/>
            <person name="Ross M.T."/>
            <person name="Harrow J."/>
            <person name="Olson M.V."/>
            <person name="Beck S."/>
            <person name="Rogers J."/>
            <person name="Bentley D.R."/>
        </authorList>
    </citation>
    <scope>NUCLEOTIDE SEQUENCE [LARGE SCALE GENOMIC DNA]</scope>
</reference>
<reference key="5">
    <citation type="submission" date="2005-07" db="EMBL/GenBank/DDBJ databases">
        <authorList>
            <person name="Mural R.J."/>
            <person name="Istrail S."/>
            <person name="Sutton G.G."/>
            <person name="Florea L."/>
            <person name="Halpern A.L."/>
            <person name="Mobarry C.M."/>
            <person name="Lippert R."/>
            <person name="Walenz B."/>
            <person name="Shatkay H."/>
            <person name="Dew I."/>
            <person name="Miller J.R."/>
            <person name="Flanigan M.J."/>
            <person name="Edwards N.J."/>
            <person name="Bolanos R."/>
            <person name="Fasulo D."/>
            <person name="Halldorsson B.V."/>
            <person name="Hannenhalli S."/>
            <person name="Turner R."/>
            <person name="Yooseph S."/>
            <person name="Lu F."/>
            <person name="Nusskern D.R."/>
            <person name="Shue B.C."/>
            <person name="Zheng X.H."/>
            <person name="Zhong F."/>
            <person name="Delcher A.L."/>
            <person name="Huson D.H."/>
            <person name="Kravitz S.A."/>
            <person name="Mouchard L."/>
            <person name="Reinert K."/>
            <person name="Remington K.A."/>
            <person name="Clark A.G."/>
            <person name="Waterman M.S."/>
            <person name="Eichler E.E."/>
            <person name="Adams M.D."/>
            <person name="Hunkapiller M.W."/>
            <person name="Myers E.W."/>
            <person name="Venter J.C."/>
        </authorList>
    </citation>
    <scope>NUCLEOTIDE SEQUENCE [LARGE SCALE GENOMIC DNA]</scope>
</reference>
<reference key="6">
    <citation type="journal article" date="2004" name="Genome Res.">
        <title>The status, quality, and expansion of the NIH full-length cDNA project: the Mammalian Gene Collection (MGC).</title>
        <authorList>
            <consortium name="The MGC Project Team"/>
        </authorList>
    </citation>
    <scope>NUCLEOTIDE SEQUENCE [LARGE SCALE MRNA] (ISOFORMS 1 AND 2)</scope>
</reference>
<reference key="7">
    <citation type="journal article" date="2008" name="Proc. Natl. Acad. Sci. U.S.A.">
        <title>Structural diversity in the RGS domain and its interaction with heterotrimeric G protein alpha-subunits.</title>
        <authorList>
            <person name="Soundararajan M."/>
            <person name="Willard F.S."/>
            <person name="Kimple A.J."/>
            <person name="Turnbull A.P."/>
            <person name="Ball L.J."/>
            <person name="Schoch G.A."/>
            <person name="Gileadi C."/>
            <person name="Fedorov O.Y."/>
            <person name="Dowler E.F."/>
            <person name="Higman V.A."/>
            <person name="Hutsell S.Q."/>
            <person name="Sundstroem M."/>
            <person name="Doyle D.A."/>
            <person name="Siderovski D.P."/>
        </authorList>
    </citation>
    <scope>X-RAY CRYSTALLOGRAPHY (1.70 ANGSTROMS) OF 42-173 IN COMPLEX WITH GNAI3</scope>
    <scope>FUNCTION</scope>
    <scope>INTERACTION WITH GNAI3</scope>
</reference>
<evidence type="ECO:0000250" key="1">
    <source>
        <dbReference type="UniProtKB" id="P49804"/>
    </source>
</evidence>
<evidence type="ECO:0000255" key="2">
    <source>
        <dbReference type="PROSITE-ProRule" id="PRU00171"/>
    </source>
</evidence>
<evidence type="ECO:0000269" key="3">
    <source>
    </source>
</evidence>
<evidence type="ECO:0000303" key="4">
    <source>
    </source>
</evidence>
<evidence type="ECO:0000303" key="5">
    <source>
    </source>
</evidence>
<evidence type="ECO:0007829" key="6">
    <source>
        <dbReference type="PDB" id="2IHD"/>
    </source>
</evidence>
<evidence type="ECO:0007829" key="7">
    <source>
        <dbReference type="PDB" id="2ODE"/>
    </source>
</evidence>
<evidence type="ECO:0007829" key="8">
    <source>
        <dbReference type="PDB" id="5DO9"/>
    </source>
</evidence>
<sequence>MAALLMPRRNKGMRTRLGCLSHKSDSCSDFTAILPDKPNRALKRLSTEEATRWADSFDVLLSHKYGVAAFRAFLKTEFSEENLEFWLACEEFKKTRSTAKLVSKAHRIFEEFVDVQAPREVNIDFQTREATRKNLQEPSLTCFDQAQGKVHSLMEKDSYPRFLRSKMYLDLLSQSQRRLS</sequence>
<organism>
    <name type="scientific">Homo sapiens</name>
    <name type="common">Human</name>
    <dbReference type="NCBI Taxonomy" id="9606"/>
    <lineage>
        <taxon>Eukaryota</taxon>
        <taxon>Metazoa</taxon>
        <taxon>Chordata</taxon>
        <taxon>Craniata</taxon>
        <taxon>Vertebrata</taxon>
        <taxon>Euteleostomi</taxon>
        <taxon>Mammalia</taxon>
        <taxon>Eutheria</taxon>
        <taxon>Euarchontoglires</taxon>
        <taxon>Primates</taxon>
        <taxon>Haplorrhini</taxon>
        <taxon>Catarrhini</taxon>
        <taxon>Hominidae</taxon>
        <taxon>Homo</taxon>
    </lineage>
</organism>
<dbReference type="EMBL" id="AF297015">
    <property type="protein sequence ID" value="AAG45337.1"/>
    <property type="molecule type" value="mRNA"/>
</dbReference>
<dbReference type="EMBL" id="AF300649">
    <property type="protein sequence ID" value="AAG18443.1"/>
    <property type="molecule type" value="mRNA"/>
</dbReference>
<dbReference type="EMBL" id="AK296514">
    <property type="protein sequence ID" value="BAG59146.1"/>
    <property type="molecule type" value="mRNA"/>
</dbReference>
<dbReference type="EMBL" id="AK294660">
    <property type="protein sequence ID" value="BAG57830.1"/>
    <property type="molecule type" value="mRNA"/>
</dbReference>
<dbReference type="EMBL" id="AL353778">
    <property type="status" value="NOT_ANNOTATED_CDS"/>
    <property type="molecule type" value="Genomic_DNA"/>
</dbReference>
<dbReference type="EMBL" id="CH471067">
    <property type="protein sequence ID" value="EAW91130.1"/>
    <property type="molecule type" value="Genomic_DNA"/>
</dbReference>
<dbReference type="EMBL" id="BC069677">
    <property type="protein sequence ID" value="AAH69677.1"/>
    <property type="molecule type" value="mRNA"/>
</dbReference>
<dbReference type="EMBL" id="BC069718">
    <property type="protein sequence ID" value="AAH69718.1"/>
    <property type="molecule type" value="mRNA"/>
</dbReference>
<dbReference type="EMBL" id="BC103865">
    <property type="protein sequence ID" value="AAI03866.1"/>
    <property type="molecule type" value="mRNA"/>
</dbReference>
<dbReference type="EMBL" id="BC103866">
    <property type="protein sequence ID" value="AAI03867.1"/>
    <property type="molecule type" value="mRNA"/>
</dbReference>
<dbReference type="EMBL" id="BC103867">
    <property type="protein sequence ID" value="AAI03868.1"/>
    <property type="molecule type" value="mRNA"/>
</dbReference>
<dbReference type="CCDS" id="CCDS1349.1">
    <molecule id="P57771-2"/>
</dbReference>
<dbReference type="CCDS" id="CCDS41443.1">
    <molecule id="P57771-1"/>
</dbReference>
<dbReference type="RefSeq" id="NP_001095920.1">
    <molecule id="P57771-1"/>
    <property type="nucleotide sequence ID" value="NM_001102450.3"/>
</dbReference>
<dbReference type="RefSeq" id="NP_001356493.1">
    <molecule id="P57771-1"/>
    <property type="nucleotide sequence ID" value="NM_001369564.2"/>
</dbReference>
<dbReference type="RefSeq" id="NP_001374776.1">
    <molecule id="P57771-1"/>
    <property type="nucleotide sequence ID" value="NM_001387847.1"/>
</dbReference>
<dbReference type="RefSeq" id="NP_001374777.1">
    <molecule id="P57771-1"/>
    <property type="nucleotide sequence ID" value="NM_001387848.1"/>
</dbReference>
<dbReference type="RefSeq" id="NP_001374778.1">
    <molecule id="P57771-1"/>
    <property type="nucleotide sequence ID" value="NM_001387849.1"/>
</dbReference>
<dbReference type="RefSeq" id="NP_203131.1">
    <molecule id="P57771-2"/>
    <property type="nucleotide sequence ID" value="NM_033345.4"/>
</dbReference>
<dbReference type="RefSeq" id="XP_005245612.1">
    <property type="nucleotide sequence ID" value="XM_005245555.3"/>
</dbReference>
<dbReference type="RefSeq" id="XP_011508391.1">
    <molecule id="P57771-2"/>
    <property type="nucleotide sequence ID" value="XM_011510089.4"/>
</dbReference>
<dbReference type="RefSeq" id="XP_011508392.1">
    <property type="nucleotide sequence ID" value="XM_011510090.2"/>
</dbReference>
<dbReference type="RefSeq" id="XP_016858120.1">
    <molecule id="P57771-2"/>
    <property type="nucleotide sequence ID" value="XM_017002631.3"/>
</dbReference>
<dbReference type="RefSeq" id="XP_016858121.1">
    <property type="nucleotide sequence ID" value="XM_017002632.1"/>
</dbReference>
<dbReference type="RefSeq" id="XP_016858122.1">
    <property type="nucleotide sequence ID" value="XM_017002633.1"/>
</dbReference>
<dbReference type="RefSeq" id="XP_016858123.1">
    <property type="nucleotide sequence ID" value="XM_017002634.1"/>
</dbReference>
<dbReference type="RefSeq" id="XP_016858124.1">
    <property type="nucleotide sequence ID" value="XM_017002635.1"/>
</dbReference>
<dbReference type="RefSeq" id="XP_016858125.1">
    <property type="nucleotide sequence ID" value="XM_017002636.1"/>
</dbReference>
<dbReference type="RefSeq" id="XP_016858126.1">
    <property type="nucleotide sequence ID" value="XM_017002637.1"/>
</dbReference>
<dbReference type="RefSeq" id="XP_054195293.1">
    <molecule id="P57771-2"/>
    <property type="nucleotide sequence ID" value="XM_054339318.1"/>
</dbReference>
<dbReference type="RefSeq" id="XP_054195294.1">
    <molecule id="P57771-2"/>
    <property type="nucleotide sequence ID" value="XM_054339319.1"/>
</dbReference>
<dbReference type="RefSeq" id="XP_054195295.1">
    <molecule id="P57771-2"/>
    <property type="nucleotide sequence ID" value="XM_054339320.1"/>
</dbReference>
<dbReference type="RefSeq" id="XP_054195296.1">
    <molecule id="P57771-2"/>
    <property type="nucleotide sequence ID" value="XM_054339321.1"/>
</dbReference>
<dbReference type="PDB" id="2IHD">
    <property type="method" value="X-ray"/>
    <property type="resolution" value="1.70 A"/>
    <property type="chains" value="A=42-173"/>
</dbReference>
<dbReference type="PDB" id="2ODE">
    <property type="method" value="X-ray"/>
    <property type="resolution" value="1.90 A"/>
    <property type="chains" value="B/D=42-180"/>
</dbReference>
<dbReference type="PDB" id="5DO9">
    <property type="method" value="X-ray"/>
    <property type="resolution" value="2.60 A"/>
    <property type="chains" value="B/D/F=42-173"/>
</dbReference>
<dbReference type="PDBsum" id="2IHD"/>
<dbReference type="PDBsum" id="2ODE"/>
<dbReference type="PDBsum" id="5DO9"/>
<dbReference type="SMR" id="P57771"/>
<dbReference type="BioGRID" id="124512">
    <property type="interactions" value="12"/>
</dbReference>
<dbReference type="DIP" id="DIP-59093N"/>
<dbReference type="FunCoup" id="P57771">
    <property type="interactions" value="340"/>
</dbReference>
<dbReference type="IntAct" id="P57771">
    <property type="interactions" value="10"/>
</dbReference>
<dbReference type="STRING" id="9606.ENSP00000258302"/>
<dbReference type="BindingDB" id="P57771"/>
<dbReference type="ChEMBL" id="CHEMBL2034803"/>
<dbReference type="GuidetoPHARMACOLOGY" id="2813"/>
<dbReference type="GlyGen" id="P57771">
    <property type="glycosylation" value="2 sites, 1 O-linked glycan (2 sites)"/>
</dbReference>
<dbReference type="iPTMnet" id="P57771"/>
<dbReference type="PhosphoSitePlus" id="P57771"/>
<dbReference type="BioMuta" id="RGS8"/>
<dbReference type="DMDM" id="13124465"/>
<dbReference type="MassIVE" id="P57771"/>
<dbReference type="PaxDb" id="9606-ENSP00000258302"/>
<dbReference type="PeptideAtlas" id="P57771"/>
<dbReference type="ProteomicsDB" id="57032">
    <molecule id="P57771-1"/>
</dbReference>
<dbReference type="ProteomicsDB" id="57033">
    <molecule id="P57771-2"/>
</dbReference>
<dbReference type="Antibodypedia" id="34440">
    <property type="antibodies" value="126 antibodies from 20 providers"/>
</dbReference>
<dbReference type="DNASU" id="85397"/>
<dbReference type="Ensembl" id="ENST00000258302.8">
    <molecule id="P57771-2"/>
    <property type="protein sequence ID" value="ENSP00000258302.4"/>
    <property type="gene ID" value="ENSG00000135824.13"/>
</dbReference>
<dbReference type="Ensembl" id="ENST00000367556.5">
    <molecule id="P57771-1"/>
    <property type="protein sequence ID" value="ENSP00000356527.1"/>
    <property type="gene ID" value="ENSG00000135824.13"/>
</dbReference>
<dbReference type="Ensembl" id="ENST00000367557.8">
    <molecule id="P57771-1"/>
    <property type="protein sequence ID" value="ENSP00000356528.4"/>
    <property type="gene ID" value="ENSG00000135824.13"/>
</dbReference>
<dbReference type="Ensembl" id="ENST00000483095.6">
    <molecule id="P57771-1"/>
    <property type="protein sequence ID" value="ENSP00000426289.1"/>
    <property type="gene ID" value="ENSG00000135824.13"/>
</dbReference>
<dbReference type="Ensembl" id="ENST00000515211.2">
    <molecule id="P57771-1"/>
    <property type="protein sequence ID" value="ENSP00000511884.1"/>
    <property type="gene ID" value="ENSG00000135824.13"/>
</dbReference>
<dbReference type="GeneID" id="85397"/>
<dbReference type="KEGG" id="hsa:85397"/>
<dbReference type="MANE-Select" id="ENST00000515211.2">
    <property type="protein sequence ID" value="ENSP00000511884.1"/>
    <property type="RefSeq nucleotide sequence ID" value="NM_001102450.3"/>
    <property type="RefSeq protein sequence ID" value="NP_001095920.1"/>
</dbReference>
<dbReference type="UCSC" id="uc001gpm.2">
    <molecule id="P57771-1"/>
    <property type="organism name" value="human"/>
</dbReference>
<dbReference type="AGR" id="HGNC:16810"/>
<dbReference type="CTD" id="85397"/>
<dbReference type="DisGeNET" id="85397"/>
<dbReference type="GeneCards" id="RGS8"/>
<dbReference type="HGNC" id="HGNC:16810">
    <property type="gene designation" value="RGS8"/>
</dbReference>
<dbReference type="HPA" id="ENSG00000135824">
    <property type="expression patterns" value="Group enriched (brain, retina)"/>
</dbReference>
<dbReference type="MIM" id="607189">
    <property type="type" value="gene"/>
</dbReference>
<dbReference type="neXtProt" id="NX_P57771"/>
<dbReference type="OpenTargets" id="ENSG00000135824"/>
<dbReference type="PharmGKB" id="PA34379"/>
<dbReference type="VEuPathDB" id="HostDB:ENSG00000135824"/>
<dbReference type="eggNOG" id="KOG3589">
    <property type="taxonomic scope" value="Eukaryota"/>
</dbReference>
<dbReference type="GeneTree" id="ENSGT00940000154304"/>
<dbReference type="HOGENOM" id="CLU_059863_3_1_1"/>
<dbReference type="InParanoid" id="P57771"/>
<dbReference type="OMA" id="MHQSTKL"/>
<dbReference type="OrthoDB" id="196547at2759"/>
<dbReference type="PAN-GO" id="P57771">
    <property type="GO annotations" value="0 GO annotations based on evolutionary models"/>
</dbReference>
<dbReference type="PhylomeDB" id="P57771"/>
<dbReference type="TreeFam" id="TF315837"/>
<dbReference type="PathwayCommons" id="P57771"/>
<dbReference type="Reactome" id="R-HSA-418594">
    <property type="pathway name" value="G alpha (i) signalling events"/>
</dbReference>
<dbReference type="SignaLink" id="P57771"/>
<dbReference type="BioGRID-ORCS" id="85397">
    <property type="hits" value="11 hits in 1138 CRISPR screens"/>
</dbReference>
<dbReference type="ChiTaRS" id="RGS8">
    <property type="organism name" value="human"/>
</dbReference>
<dbReference type="EvolutionaryTrace" id="P57771"/>
<dbReference type="GeneWiki" id="RGS8"/>
<dbReference type="GenomeRNAi" id="85397"/>
<dbReference type="Pharos" id="P57771">
    <property type="development level" value="Tchem"/>
</dbReference>
<dbReference type="PRO" id="PR:P57771"/>
<dbReference type="Proteomes" id="UP000005640">
    <property type="component" value="Chromosome 1"/>
</dbReference>
<dbReference type="RNAct" id="P57771">
    <property type="molecule type" value="protein"/>
</dbReference>
<dbReference type="Bgee" id="ENSG00000135824">
    <property type="expression patterns" value="Expressed in lateral nuclear group of thalamus and 88 other cell types or tissues"/>
</dbReference>
<dbReference type="ExpressionAtlas" id="P57771">
    <property type="expression patterns" value="baseline and differential"/>
</dbReference>
<dbReference type="GO" id="GO:0009898">
    <property type="term" value="C:cytoplasmic side of plasma membrane"/>
    <property type="evidence" value="ECO:0000250"/>
    <property type="project" value="UniProtKB"/>
</dbReference>
<dbReference type="GO" id="GO:0030425">
    <property type="term" value="C:dendrite"/>
    <property type="evidence" value="ECO:0000250"/>
    <property type="project" value="UniProtKB"/>
</dbReference>
<dbReference type="GO" id="GO:0032809">
    <property type="term" value="C:neuronal cell body membrane"/>
    <property type="evidence" value="ECO:0000250"/>
    <property type="project" value="UniProtKB"/>
</dbReference>
<dbReference type="GO" id="GO:0005634">
    <property type="term" value="C:nucleus"/>
    <property type="evidence" value="ECO:0000250"/>
    <property type="project" value="UniProtKB"/>
</dbReference>
<dbReference type="GO" id="GO:0043204">
    <property type="term" value="C:perikaryon"/>
    <property type="evidence" value="ECO:0007669"/>
    <property type="project" value="UniProtKB-SubCell"/>
</dbReference>
<dbReference type="GO" id="GO:0005886">
    <property type="term" value="C:plasma membrane"/>
    <property type="evidence" value="ECO:0000304"/>
    <property type="project" value="Reactome"/>
</dbReference>
<dbReference type="GO" id="GO:0045202">
    <property type="term" value="C:synapse"/>
    <property type="evidence" value="ECO:0007669"/>
    <property type="project" value="GOC"/>
</dbReference>
<dbReference type="GO" id="GO:0005096">
    <property type="term" value="F:GTPase activator activity"/>
    <property type="evidence" value="ECO:0000314"/>
    <property type="project" value="UniProtKB"/>
</dbReference>
<dbReference type="GO" id="GO:0003924">
    <property type="term" value="F:GTPase activity"/>
    <property type="evidence" value="ECO:0000304"/>
    <property type="project" value="Reactome"/>
</dbReference>
<dbReference type="GO" id="GO:0007213">
    <property type="term" value="P:G protein-coupled acetylcholine receptor signaling pathway"/>
    <property type="evidence" value="ECO:0000250"/>
    <property type="project" value="UniProtKB"/>
</dbReference>
<dbReference type="GO" id="GO:0007186">
    <property type="term" value="P:G protein-coupled receptor signaling pathway"/>
    <property type="evidence" value="ECO:0000304"/>
    <property type="project" value="Reactome"/>
</dbReference>
<dbReference type="GO" id="GO:0009968">
    <property type="term" value="P:negative regulation of signal transduction"/>
    <property type="evidence" value="ECO:0007669"/>
    <property type="project" value="UniProtKB-KW"/>
</dbReference>
<dbReference type="GO" id="GO:0043547">
    <property type="term" value="P:positive regulation of GTPase activity"/>
    <property type="evidence" value="ECO:0000314"/>
    <property type="project" value="UniProtKB"/>
</dbReference>
<dbReference type="GO" id="GO:0060159">
    <property type="term" value="P:regulation of dopamine receptor signaling pathway"/>
    <property type="evidence" value="ECO:0000250"/>
    <property type="project" value="UniProtKB"/>
</dbReference>
<dbReference type="CDD" id="cd08711">
    <property type="entry name" value="RGS_RGS8"/>
    <property type="match status" value="1"/>
</dbReference>
<dbReference type="FunFam" id="1.10.167.10:FF:000001">
    <property type="entry name" value="Putative regulator of g-protein signaling 12"/>
    <property type="match status" value="1"/>
</dbReference>
<dbReference type="FunFam" id="1.10.196.10:FF:000001">
    <property type="entry name" value="Regulator of G-protein signaling 8"/>
    <property type="match status" value="1"/>
</dbReference>
<dbReference type="Gene3D" id="1.10.196.10">
    <property type="match status" value="2"/>
</dbReference>
<dbReference type="Gene3D" id="1.10.167.10">
    <property type="entry name" value="Regulator of G-protein Signalling 4, domain 2"/>
    <property type="match status" value="1"/>
</dbReference>
<dbReference type="InterPro" id="IPR016137">
    <property type="entry name" value="RGS"/>
</dbReference>
<dbReference type="InterPro" id="IPR034949">
    <property type="entry name" value="RGS_RGS8"/>
</dbReference>
<dbReference type="InterPro" id="IPR036305">
    <property type="entry name" value="RGS_sf"/>
</dbReference>
<dbReference type="InterPro" id="IPR024066">
    <property type="entry name" value="RGS_subdom1/3"/>
</dbReference>
<dbReference type="InterPro" id="IPR044926">
    <property type="entry name" value="RGS_subdomain_2"/>
</dbReference>
<dbReference type="PANTHER" id="PTHR10845">
    <property type="entry name" value="REGULATOR OF G PROTEIN SIGNALING"/>
    <property type="match status" value="1"/>
</dbReference>
<dbReference type="PANTHER" id="PTHR10845:SF147">
    <property type="entry name" value="REGULATOR OF G-PROTEIN SIGNALING 8"/>
    <property type="match status" value="1"/>
</dbReference>
<dbReference type="Pfam" id="PF00615">
    <property type="entry name" value="RGS"/>
    <property type="match status" value="1"/>
</dbReference>
<dbReference type="PRINTS" id="PR01301">
    <property type="entry name" value="RGSPROTEIN"/>
</dbReference>
<dbReference type="SMART" id="SM00315">
    <property type="entry name" value="RGS"/>
    <property type="match status" value="1"/>
</dbReference>
<dbReference type="SUPFAM" id="SSF48097">
    <property type="entry name" value="Regulator of G-protein signaling, RGS"/>
    <property type="match status" value="1"/>
</dbReference>
<dbReference type="PROSITE" id="PS50132">
    <property type="entry name" value="RGS"/>
    <property type="match status" value="1"/>
</dbReference>
<proteinExistence type="evidence at protein level"/>
<feature type="chain" id="PRO_0000204199" description="Regulator of G-protein signaling 8">
    <location>
        <begin position="1"/>
        <end position="180"/>
    </location>
</feature>
<feature type="domain" description="RGS" evidence="2">
    <location>
        <begin position="56"/>
        <end position="171"/>
    </location>
</feature>
<feature type="modified residue" description="Phosphoserine" evidence="1">
    <location>
        <position position="26"/>
    </location>
</feature>
<feature type="splice variant" id="VSP_036421" description="In isoform 2." evidence="4 5">
    <original>MAALLMPRR</original>
    <variation>MWNTLTRSLSDHPVGKDPQAMRTGQRQ</variation>
    <location>
        <begin position="1"/>
        <end position="9"/>
    </location>
</feature>
<feature type="helix" evidence="6">
    <location>
        <begin position="47"/>
        <end position="52"/>
    </location>
</feature>
<feature type="turn" evidence="7">
    <location>
        <begin position="53"/>
        <end position="55"/>
    </location>
</feature>
<feature type="helix" evidence="6">
    <location>
        <begin position="57"/>
        <end position="61"/>
    </location>
</feature>
<feature type="helix" evidence="6">
    <location>
        <begin position="64"/>
        <end position="76"/>
    </location>
</feature>
<feature type="helix" evidence="6">
    <location>
        <begin position="81"/>
        <end position="92"/>
    </location>
</feature>
<feature type="helix" evidence="6">
    <location>
        <begin position="98"/>
        <end position="112"/>
    </location>
</feature>
<feature type="helix" evidence="6">
    <location>
        <begin position="125"/>
        <end position="134"/>
    </location>
</feature>
<feature type="turn" evidence="6">
    <location>
        <begin position="140"/>
        <end position="143"/>
    </location>
</feature>
<feature type="helix" evidence="6">
    <location>
        <begin position="144"/>
        <end position="156"/>
    </location>
</feature>
<feature type="helix" evidence="6">
    <location>
        <begin position="158"/>
        <end position="163"/>
    </location>
</feature>
<feature type="helix" evidence="6">
    <location>
        <begin position="166"/>
        <end position="169"/>
    </location>
</feature>
<feature type="turn" evidence="8">
    <location>
        <begin position="170"/>
        <end position="172"/>
    </location>
</feature>